<dbReference type="EC" id="2.4.1.-" evidence="1"/>
<dbReference type="EMBL" id="AK031361">
    <property type="protein sequence ID" value="BAC27366.1"/>
    <property type="molecule type" value="mRNA"/>
</dbReference>
<dbReference type="EMBL" id="AK043722">
    <property type="protein sequence ID" value="BAC31629.1"/>
    <property type="molecule type" value="mRNA"/>
</dbReference>
<dbReference type="EMBL" id="AK156318">
    <property type="protein sequence ID" value="BAE33671.1"/>
    <property type="molecule type" value="mRNA"/>
</dbReference>
<dbReference type="EMBL" id="AL645972">
    <property type="status" value="NOT_ANNOTATED_CDS"/>
    <property type="molecule type" value="Genomic_DNA"/>
</dbReference>
<dbReference type="EMBL" id="BC088993">
    <property type="protein sequence ID" value="AAH88993.1"/>
    <property type="molecule type" value="mRNA"/>
</dbReference>
<dbReference type="EMBL" id="BC022739">
    <property type="protein sequence ID" value="AAH22739.1"/>
    <property type="molecule type" value="mRNA"/>
</dbReference>
<dbReference type="EMBL" id="BC125626">
    <property type="protein sequence ID" value="AAI25627.1"/>
    <property type="molecule type" value="mRNA"/>
</dbReference>
<dbReference type="EMBL" id="BC132193">
    <property type="protein sequence ID" value="AAI32194.1"/>
    <property type="molecule type" value="mRNA"/>
</dbReference>
<dbReference type="EMBL" id="BC145166">
    <property type="protein sequence ID" value="AAI45167.1"/>
    <property type="molecule type" value="mRNA"/>
</dbReference>
<dbReference type="CCDS" id="CCDS25780.1">
    <molecule id="Q3U129-1"/>
</dbReference>
<dbReference type="RefSeq" id="NP_848779.2">
    <molecule id="Q3U129-1"/>
    <property type="nucleotide sequence ID" value="NM_178664.5"/>
</dbReference>
<dbReference type="RefSeq" id="XP_006532815.1">
    <molecule id="Q3U129-1"/>
    <property type="nucleotide sequence ID" value="XM_006532752.4"/>
</dbReference>
<dbReference type="SMR" id="Q3U129"/>
<dbReference type="FunCoup" id="Q3U129">
    <property type="interactions" value="12"/>
</dbReference>
<dbReference type="IntAct" id="Q3U129">
    <property type="interactions" value="1"/>
</dbReference>
<dbReference type="STRING" id="10090.ENSMUSP00000068590"/>
<dbReference type="CAZy" id="GT2">
    <property type="family name" value="Glycosyltransferase Family 2"/>
</dbReference>
<dbReference type="iPTMnet" id="Q3U129"/>
<dbReference type="PhosphoSitePlus" id="Q3U129"/>
<dbReference type="PaxDb" id="10090-ENSMUSP00000068590"/>
<dbReference type="ProteomicsDB" id="277150">
    <molecule id="Q3U129-1"/>
</dbReference>
<dbReference type="ProteomicsDB" id="277151">
    <molecule id="Q3U129-2"/>
</dbReference>
<dbReference type="ProteomicsDB" id="277152">
    <molecule id="Q3U129-3"/>
</dbReference>
<dbReference type="Antibodypedia" id="19925">
    <property type="antibodies" value="17 antibodies from 7 providers"/>
</dbReference>
<dbReference type="Ensembl" id="ENSMUST00000062654.8">
    <molecule id="Q3U129-3"/>
    <property type="protein sequence ID" value="ENSMUSP00000049890.8"/>
    <property type="gene ID" value="ENSMUSG00000046605.15"/>
</dbReference>
<dbReference type="Ensembl" id="ENSMUST00000067399.14">
    <molecule id="Q3U129-1"/>
    <property type="protein sequence ID" value="ENSMUSP00000068590.8"/>
    <property type="gene ID" value="ENSMUSG00000046605.15"/>
</dbReference>
<dbReference type="GeneID" id="210004"/>
<dbReference type="KEGG" id="mmu:210004"/>
<dbReference type="UCSC" id="uc007mwa.2">
    <molecule id="Q3U129-1"/>
    <property type="organism name" value="mouse"/>
</dbReference>
<dbReference type="AGR" id="MGI:2441705"/>
<dbReference type="CTD" id="146712"/>
<dbReference type="MGI" id="MGI:2441705">
    <property type="gene designation" value="B3gntl1"/>
</dbReference>
<dbReference type="VEuPathDB" id="HostDB:ENSMUSG00000046605"/>
<dbReference type="eggNOG" id="KOG2977">
    <property type="taxonomic scope" value="Eukaryota"/>
</dbReference>
<dbReference type="GeneTree" id="ENSGT00390000006933"/>
<dbReference type="HOGENOM" id="CLU_031597_0_0_1"/>
<dbReference type="InParanoid" id="Q3U129"/>
<dbReference type="OMA" id="GWPEDYD"/>
<dbReference type="OrthoDB" id="206708at2759"/>
<dbReference type="PhylomeDB" id="Q3U129"/>
<dbReference type="TreeFam" id="TF315120"/>
<dbReference type="Reactome" id="R-MMU-913709">
    <property type="pathway name" value="O-linked glycosylation of mucins"/>
</dbReference>
<dbReference type="BioGRID-ORCS" id="210004">
    <property type="hits" value="1 hit in 78 CRISPR screens"/>
</dbReference>
<dbReference type="ChiTaRS" id="B3gntl1">
    <property type="organism name" value="mouse"/>
</dbReference>
<dbReference type="PRO" id="PR:Q3U129"/>
<dbReference type="Proteomes" id="UP000000589">
    <property type="component" value="Chromosome 11"/>
</dbReference>
<dbReference type="RNAct" id="Q3U129">
    <property type="molecule type" value="protein"/>
</dbReference>
<dbReference type="Bgee" id="ENSMUSG00000046605">
    <property type="expression patterns" value="Expressed in animal zygote and 105 other cell types or tissues"/>
</dbReference>
<dbReference type="GO" id="GO:0005737">
    <property type="term" value="C:cytoplasm"/>
    <property type="evidence" value="ECO:0000250"/>
    <property type="project" value="UniProtKB"/>
</dbReference>
<dbReference type="GO" id="GO:0141125">
    <property type="term" value="F:tRNA-queuosine(34) galactosyltransferase activity"/>
    <property type="evidence" value="ECO:0000250"/>
    <property type="project" value="UniProtKB"/>
</dbReference>
<dbReference type="GO" id="GO:0006417">
    <property type="term" value="P:regulation of translation"/>
    <property type="evidence" value="ECO:0000250"/>
    <property type="project" value="UniProtKB"/>
</dbReference>
<dbReference type="GO" id="GO:0006400">
    <property type="term" value="P:tRNA modification"/>
    <property type="evidence" value="ECO:0000250"/>
    <property type="project" value="UniProtKB"/>
</dbReference>
<dbReference type="CDD" id="cd06913">
    <property type="entry name" value="beta3GnTL1_like"/>
    <property type="match status" value="1"/>
</dbReference>
<dbReference type="Gene3D" id="3.90.550.10">
    <property type="entry name" value="Spore Coat Polysaccharide Biosynthesis Protein SpsA, Chain A"/>
    <property type="match status" value="1"/>
</dbReference>
<dbReference type="InterPro" id="IPR001173">
    <property type="entry name" value="Glyco_trans_2-like"/>
</dbReference>
<dbReference type="InterPro" id="IPR029044">
    <property type="entry name" value="Nucleotide-diphossugar_trans"/>
</dbReference>
<dbReference type="PANTHER" id="PTHR22916">
    <property type="entry name" value="GLYCOSYLTRANSFERASE"/>
    <property type="match status" value="1"/>
</dbReference>
<dbReference type="PANTHER" id="PTHR22916:SF3">
    <property type="entry name" value="UDP-GLCNAC:BETAGAL BETA-1,3-N-ACETYLGLUCOSAMINYLTRANSFERASE-LIKE PROTEIN 1"/>
    <property type="match status" value="1"/>
</dbReference>
<dbReference type="Pfam" id="PF00535">
    <property type="entry name" value="Glycos_transf_2"/>
    <property type="match status" value="1"/>
</dbReference>
<dbReference type="SUPFAM" id="SSF53448">
    <property type="entry name" value="Nucleotide-diphospho-sugar transferases"/>
    <property type="match status" value="1"/>
</dbReference>
<keyword id="KW-0025">Alternative splicing</keyword>
<keyword id="KW-0963">Cytoplasm</keyword>
<keyword id="KW-0328">Glycosyltransferase</keyword>
<keyword id="KW-1185">Reference proteome</keyword>
<keyword id="KW-0808">Transferase</keyword>
<proteinExistence type="evidence at transcript level"/>
<sequence>MEVSENATTRGSLALVSIILPVHNAEQWLDECLMSVLQQDFEGAMELSVFNDASKDKSRAIIEKWKVKLEDSGISVVIGGHDSPSPRGVGYSKNQAVAQSTGSYLCFLDSDDVMMPQRVRMQYEAAGQHPTSIIGCQVRRDPPDSTERYTRWINHLTSDQLLTQVFTSHGPTVIMPTWFCSRAWFSHVGPFDEGGQGVPEDLLFFYEHLRKGGGVFRVDHSLLLYRYHLYAATHSVLEMTIWTHRVHFLEEQVLPHWKSFTIWNAGKQGRKLYRSLTAASRHKVVAFCDVDENKIRKGFYCYEDSQERPKPKVPILHFQAAQSPFVICVKLDLTGGEFEDNLKSLDLQEGRDFVHFS</sequence>
<protein>
    <recommendedName>
        <fullName evidence="4">Queuosine-tRNA galactosyltransferase</fullName>
        <shortName evidence="4">QTGAL</shortName>
        <ecNumber evidence="1">2.4.1.-</ecNumber>
    </recommendedName>
    <alternativeName>
        <fullName>UDP-GlcNAc:betaGal beta-1,3-N-acetylglucosaminyltransferase-like protein 1</fullName>
        <shortName>BGnT-like protein 1</shortName>
        <shortName>Beta1,3-N-acetylglucosaminyltransferase-like protein 1</shortName>
        <shortName>Beta3Gn-T-like protein 1</shortName>
        <shortName>Beta3GnTL1</shortName>
    </alternativeName>
</protein>
<gene>
    <name evidence="5" type="primary">B3gntl1</name>
    <name evidence="1" type="synonym">QTGAL</name>
</gene>
<name>QTGAL_MOUSE</name>
<feature type="chain" id="PRO_0000289221" description="Queuosine-tRNA galactosyltransferase">
    <location>
        <begin position="1"/>
        <end position="357"/>
    </location>
</feature>
<feature type="splice variant" id="VSP_025965" description="In isoform 2." evidence="2">
    <location>
        <begin position="111"/>
        <end position="117"/>
    </location>
</feature>
<feature type="splice variant" id="VSP_025966" description="In isoform 3." evidence="3">
    <original>EMTIWTHRVHFLEEQVLPHWKSF</original>
    <variation>DCSHMMVGAAVHMKQIHSKTTTV</variation>
    <location>
        <begin position="238"/>
        <end position="260"/>
    </location>
</feature>
<feature type="splice variant" id="VSP_025967" description="In isoform 3." evidence="3">
    <location>
        <begin position="261"/>
        <end position="357"/>
    </location>
</feature>
<feature type="sequence conflict" description="In Ref. 1; BAC27366." evidence="4" ref="1">
    <original>C</original>
    <variation>S</variation>
    <location>
        <position position="288"/>
    </location>
</feature>
<reference key="1">
    <citation type="journal article" date="2005" name="Science">
        <title>The transcriptional landscape of the mammalian genome.</title>
        <authorList>
            <person name="Carninci P."/>
            <person name="Kasukawa T."/>
            <person name="Katayama S."/>
            <person name="Gough J."/>
            <person name="Frith M.C."/>
            <person name="Maeda N."/>
            <person name="Oyama R."/>
            <person name="Ravasi T."/>
            <person name="Lenhard B."/>
            <person name="Wells C."/>
            <person name="Kodzius R."/>
            <person name="Shimokawa K."/>
            <person name="Bajic V.B."/>
            <person name="Brenner S.E."/>
            <person name="Batalov S."/>
            <person name="Forrest A.R."/>
            <person name="Zavolan M."/>
            <person name="Davis M.J."/>
            <person name="Wilming L.G."/>
            <person name="Aidinis V."/>
            <person name="Allen J.E."/>
            <person name="Ambesi-Impiombato A."/>
            <person name="Apweiler R."/>
            <person name="Aturaliya R.N."/>
            <person name="Bailey T.L."/>
            <person name="Bansal M."/>
            <person name="Baxter L."/>
            <person name="Beisel K.W."/>
            <person name="Bersano T."/>
            <person name="Bono H."/>
            <person name="Chalk A.M."/>
            <person name="Chiu K.P."/>
            <person name="Choudhary V."/>
            <person name="Christoffels A."/>
            <person name="Clutterbuck D.R."/>
            <person name="Crowe M.L."/>
            <person name="Dalla E."/>
            <person name="Dalrymple B.P."/>
            <person name="de Bono B."/>
            <person name="Della Gatta G."/>
            <person name="di Bernardo D."/>
            <person name="Down T."/>
            <person name="Engstrom P."/>
            <person name="Fagiolini M."/>
            <person name="Faulkner G."/>
            <person name="Fletcher C.F."/>
            <person name="Fukushima T."/>
            <person name="Furuno M."/>
            <person name="Futaki S."/>
            <person name="Gariboldi M."/>
            <person name="Georgii-Hemming P."/>
            <person name="Gingeras T.R."/>
            <person name="Gojobori T."/>
            <person name="Green R.E."/>
            <person name="Gustincich S."/>
            <person name="Harbers M."/>
            <person name="Hayashi Y."/>
            <person name="Hensch T.K."/>
            <person name="Hirokawa N."/>
            <person name="Hill D."/>
            <person name="Huminiecki L."/>
            <person name="Iacono M."/>
            <person name="Ikeo K."/>
            <person name="Iwama A."/>
            <person name="Ishikawa T."/>
            <person name="Jakt M."/>
            <person name="Kanapin A."/>
            <person name="Katoh M."/>
            <person name="Kawasawa Y."/>
            <person name="Kelso J."/>
            <person name="Kitamura H."/>
            <person name="Kitano H."/>
            <person name="Kollias G."/>
            <person name="Krishnan S.P."/>
            <person name="Kruger A."/>
            <person name="Kummerfeld S.K."/>
            <person name="Kurochkin I.V."/>
            <person name="Lareau L.F."/>
            <person name="Lazarevic D."/>
            <person name="Lipovich L."/>
            <person name="Liu J."/>
            <person name="Liuni S."/>
            <person name="McWilliam S."/>
            <person name="Madan Babu M."/>
            <person name="Madera M."/>
            <person name="Marchionni L."/>
            <person name="Matsuda H."/>
            <person name="Matsuzawa S."/>
            <person name="Miki H."/>
            <person name="Mignone F."/>
            <person name="Miyake S."/>
            <person name="Morris K."/>
            <person name="Mottagui-Tabar S."/>
            <person name="Mulder N."/>
            <person name="Nakano N."/>
            <person name="Nakauchi H."/>
            <person name="Ng P."/>
            <person name="Nilsson R."/>
            <person name="Nishiguchi S."/>
            <person name="Nishikawa S."/>
            <person name="Nori F."/>
            <person name="Ohara O."/>
            <person name="Okazaki Y."/>
            <person name="Orlando V."/>
            <person name="Pang K.C."/>
            <person name="Pavan W.J."/>
            <person name="Pavesi G."/>
            <person name="Pesole G."/>
            <person name="Petrovsky N."/>
            <person name="Piazza S."/>
            <person name="Reed J."/>
            <person name="Reid J.F."/>
            <person name="Ring B.Z."/>
            <person name="Ringwald M."/>
            <person name="Rost B."/>
            <person name="Ruan Y."/>
            <person name="Salzberg S.L."/>
            <person name="Sandelin A."/>
            <person name="Schneider C."/>
            <person name="Schoenbach C."/>
            <person name="Sekiguchi K."/>
            <person name="Semple C.A."/>
            <person name="Seno S."/>
            <person name="Sessa L."/>
            <person name="Sheng Y."/>
            <person name="Shibata Y."/>
            <person name="Shimada H."/>
            <person name="Shimada K."/>
            <person name="Silva D."/>
            <person name="Sinclair B."/>
            <person name="Sperling S."/>
            <person name="Stupka E."/>
            <person name="Sugiura K."/>
            <person name="Sultana R."/>
            <person name="Takenaka Y."/>
            <person name="Taki K."/>
            <person name="Tammoja K."/>
            <person name="Tan S.L."/>
            <person name="Tang S."/>
            <person name="Taylor M.S."/>
            <person name="Tegner J."/>
            <person name="Teichmann S.A."/>
            <person name="Ueda H.R."/>
            <person name="van Nimwegen E."/>
            <person name="Verardo R."/>
            <person name="Wei C.L."/>
            <person name="Yagi K."/>
            <person name="Yamanishi H."/>
            <person name="Zabarovsky E."/>
            <person name="Zhu S."/>
            <person name="Zimmer A."/>
            <person name="Hide W."/>
            <person name="Bult C."/>
            <person name="Grimmond S.M."/>
            <person name="Teasdale R.D."/>
            <person name="Liu E.T."/>
            <person name="Brusic V."/>
            <person name="Quackenbush J."/>
            <person name="Wahlestedt C."/>
            <person name="Mattick J.S."/>
            <person name="Hume D.A."/>
            <person name="Kai C."/>
            <person name="Sasaki D."/>
            <person name="Tomaru Y."/>
            <person name="Fukuda S."/>
            <person name="Kanamori-Katayama M."/>
            <person name="Suzuki M."/>
            <person name="Aoki J."/>
            <person name="Arakawa T."/>
            <person name="Iida J."/>
            <person name="Imamura K."/>
            <person name="Itoh M."/>
            <person name="Kato T."/>
            <person name="Kawaji H."/>
            <person name="Kawagashira N."/>
            <person name="Kawashima T."/>
            <person name="Kojima M."/>
            <person name="Kondo S."/>
            <person name="Konno H."/>
            <person name="Nakano K."/>
            <person name="Ninomiya N."/>
            <person name="Nishio T."/>
            <person name="Okada M."/>
            <person name="Plessy C."/>
            <person name="Shibata K."/>
            <person name="Shiraki T."/>
            <person name="Suzuki S."/>
            <person name="Tagami M."/>
            <person name="Waki K."/>
            <person name="Watahiki A."/>
            <person name="Okamura-Oho Y."/>
            <person name="Suzuki H."/>
            <person name="Kawai J."/>
            <person name="Hayashizaki Y."/>
        </authorList>
    </citation>
    <scope>NUCLEOTIDE SEQUENCE [LARGE SCALE MRNA] (ISOFORMS 1 AND 3)</scope>
    <source>
        <strain>C57BL/6J</strain>
        <strain>NOD</strain>
        <tissue>Brain cortex</tissue>
        <tissue>Spleen</tissue>
        <tissue>Testis</tissue>
    </source>
</reference>
<reference key="2">
    <citation type="journal article" date="2009" name="PLoS Biol.">
        <title>Lineage-specific biology revealed by a finished genome assembly of the mouse.</title>
        <authorList>
            <person name="Church D.M."/>
            <person name="Goodstadt L."/>
            <person name="Hillier L.W."/>
            <person name="Zody M.C."/>
            <person name="Goldstein S."/>
            <person name="She X."/>
            <person name="Bult C.J."/>
            <person name="Agarwala R."/>
            <person name="Cherry J.L."/>
            <person name="DiCuccio M."/>
            <person name="Hlavina W."/>
            <person name="Kapustin Y."/>
            <person name="Meric P."/>
            <person name="Maglott D."/>
            <person name="Birtle Z."/>
            <person name="Marques A.C."/>
            <person name="Graves T."/>
            <person name="Zhou S."/>
            <person name="Teague B."/>
            <person name="Potamousis K."/>
            <person name="Churas C."/>
            <person name="Place M."/>
            <person name="Herschleb J."/>
            <person name="Runnheim R."/>
            <person name="Forrest D."/>
            <person name="Amos-Landgraf J."/>
            <person name="Schwartz D.C."/>
            <person name="Cheng Z."/>
            <person name="Lindblad-Toh K."/>
            <person name="Eichler E.E."/>
            <person name="Ponting C.P."/>
        </authorList>
    </citation>
    <scope>NUCLEOTIDE SEQUENCE [LARGE SCALE GENOMIC DNA]</scope>
    <source>
        <strain>C57BL/6J</strain>
    </source>
</reference>
<reference key="3">
    <citation type="journal article" date="2004" name="Genome Res.">
        <title>The status, quality, and expansion of the NIH full-length cDNA project: the Mammalian Gene Collection (MGC).</title>
        <authorList>
            <consortium name="The MGC Project Team"/>
        </authorList>
    </citation>
    <scope>NUCLEOTIDE SEQUENCE [LARGE SCALE MRNA] (ISOFORMS 1 AND 2)</scope>
    <source>
        <strain>C57BL/6J</strain>
        <tissue>Brain</tissue>
        <tissue>Eye</tissue>
    </source>
</reference>
<evidence type="ECO:0000250" key="1">
    <source>
        <dbReference type="UniProtKB" id="Q67FW5"/>
    </source>
</evidence>
<evidence type="ECO:0000303" key="2">
    <source>
    </source>
</evidence>
<evidence type="ECO:0000303" key="3">
    <source>
    </source>
</evidence>
<evidence type="ECO:0000305" key="4"/>
<evidence type="ECO:0000312" key="5">
    <source>
        <dbReference type="MGI" id="MGI:2441705"/>
    </source>
</evidence>
<accession>Q3U129</accession>
<accession>B7ZNC6</accession>
<accession>Q5HZJ4</accession>
<accession>Q8BLR1</accession>
<accession>Q8C0H0</accession>
<accession>Q8R1Y3</accession>
<organism>
    <name type="scientific">Mus musculus</name>
    <name type="common">Mouse</name>
    <dbReference type="NCBI Taxonomy" id="10090"/>
    <lineage>
        <taxon>Eukaryota</taxon>
        <taxon>Metazoa</taxon>
        <taxon>Chordata</taxon>
        <taxon>Craniata</taxon>
        <taxon>Vertebrata</taxon>
        <taxon>Euteleostomi</taxon>
        <taxon>Mammalia</taxon>
        <taxon>Eutheria</taxon>
        <taxon>Euarchontoglires</taxon>
        <taxon>Glires</taxon>
        <taxon>Rodentia</taxon>
        <taxon>Myomorpha</taxon>
        <taxon>Muroidea</taxon>
        <taxon>Muridae</taxon>
        <taxon>Murinae</taxon>
        <taxon>Mus</taxon>
        <taxon>Mus</taxon>
    </lineage>
</organism>
<comment type="function">
    <text evidence="1">Glycosyltransferase that specifically catalyzes galactosylation of cytoplasmic tRNA(Tyr) modified with queuosine at position 34 (queuosine(34)). Galactosylates the cyclopentene hydroxyl group of queuosine(34) in tRNA(Tyr) to form galactosyl-queuosine(34). Mannosylation of queuosine(34) in tRNA(Tyr) is required to slow-down elongation at cognate codons UAC and suppress stop codon readthrough, thereby regulating protein translation.</text>
</comment>
<comment type="catalytic activity">
    <reaction evidence="1">
        <text>queuosine(34) in tRNA(Tyr) + UDP-alpha-D-galactose = O-5''-beta-D-galactosylqueuosine(34) in tRNA(Tyr) + UDP + H(+)</text>
        <dbReference type="Rhea" id="RHEA:78231"/>
        <dbReference type="Rhea" id="RHEA-COMP:19043"/>
        <dbReference type="Rhea" id="RHEA-COMP:19044"/>
        <dbReference type="ChEBI" id="CHEBI:15378"/>
        <dbReference type="ChEBI" id="CHEBI:58223"/>
        <dbReference type="ChEBI" id="CHEBI:66914"/>
        <dbReference type="ChEBI" id="CHEBI:194431"/>
        <dbReference type="ChEBI" id="CHEBI:228254"/>
    </reaction>
    <physiologicalReaction direction="left-to-right" evidence="1">
        <dbReference type="Rhea" id="RHEA:78232"/>
    </physiologicalReaction>
</comment>
<comment type="subcellular location">
    <subcellularLocation>
        <location evidence="1">Cytoplasm</location>
    </subcellularLocation>
</comment>
<comment type="alternative products">
    <event type="alternative splicing"/>
    <isoform>
        <id>Q3U129-1</id>
        <name>1</name>
        <sequence type="displayed"/>
    </isoform>
    <isoform>
        <id>Q3U129-2</id>
        <name>2</name>
        <sequence type="described" ref="VSP_025965"/>
    </isoform>
    <isoform>
        <id>Q3U129-3</id>
        <name>3</name>
        <sequence type="described" ref="VSP_025966 VSP_025967"/>
    </isoform>
</comment>
<comment type="similarity">
    <text evidence="4">Belongs to the glycosyltransferase 2 family.</text>
</comment>